<feature type="chain" id="PRO_0000355507" description="Large ribosomal subunit protein bL20c">
    <location>
        <begin position="1"/>
        <end position="126"/>
    </location>
</feature>
<gene>
    <name evidence="1" type="primary">rpl20</name>
</gene>
<sequence>MIRVRRGYIARRRRTKFFLFASTFRGAHSRLTRTTTQQKMRALVSAHRDRGRQKRDFRRLWITRINAVTRENGGSYSRLIHDLYKGQLLLNRKIPAQLAISNGNCLYMISNEIGSANKEIGRSSSE</sequence>
<dbReference type="EMBL" id="EF380354">
    <property type="protein sequence ID" value="ABQ52542.1"/>
    <property type="molecule type" value="Genomic_DNA"/>
</dbReference>
<dbReference type="RefSeq" id="YP_001294293.1">
    <property type="nucleotide sequence ID" value="NC_009600.1"/>
</dbReference>
<dbReference type="SMR" id="A6MMW7"/>
<dbReference type="GeneID" id="5236770"/>
<dbReference type="GO" id="GO:0009507">
    <property type="term" value="C:chloroplast"/>
    <property type="evidence" value="ECO:0007669"/>
    <property type="project" value="UniProtKB-SubCell"/>
</dbReference>
<dbReference type="GO" id="GO:1990904">
    <property type="term" value="C:ribonucleoprotein complex"/>
    <property type="evidence" value="ECO:0007669"/>
    <property type="project" value="UniProtKB-KW"/>
</dbReference>
<dbReference type="GO" id="GO:0005840">
    <property type="term" value="C:ribosome"/>
    <property type="evidence" value="ECO:0007669"/>
    <property type="project" value="UniProtKB-KW"/>
</dbReference>
<dbReference type="GO" id="GO:0019843">
    <property type="term" value="F:rRNA binding"/>
    <property type="evidence" value="ECO:0007669"/>
    <property type="project" value="UniProtKB-UniRule"/>
</dbReference>
<dbReference type="GO" id="GO:0003735">
    <property type="term" value="F:structural constituent of ribosome"/>
    <property type="evidence" value="ECO:0007669"/>
    <property type="project" value="InterPro"/>
</dbReference>
<dbReference type="GO" id="GO:0000027">
    <property type="term" value="P:ribosomal large subunit assembly"/>
    <property type="evidence" value="ECO:0007669"/>
    <property type="project" value="UniProtKB-UniRule"/>
</dbReference>
<dbReference type="GO" id="GO:0006412">
    <property type="term" value="P:translation"/>
    <property type="evidence" value="ECO:0007669"/>
    <property type="project" value="InterPro"/>
</dbReference>
<dbReference type="CDD" id="cd07026">
    <property type="entry name" value="Ribosomal_L20"/>
    <property type="match status" value="1"/>
</dbReference>
<dbReference type="FunFam" id="1.10.1900.20:FF:000001">
    <property type="entry name" value="50S ribosomal protein L20"/>
    <property type="match status" value="1"/>
</dbReference>
<dbReference type="Gene3D" id="6.10.160.10">
    <property type="match status" value="1"/>
</dbReference>
<dbReference type="Gene3D" id="1.10.1900.20">
    <property type="entry name" value="Ribosomal protein L20"/>
    <property type="match status" value="1"/>
</dbReference>
<dbReference type="HAMAP" id="MF_00382">
    <property type="entry name" value="Ribosomal_bL20"/>
    <property type="match status" value="1"/>
</dbReference>
<dbReference type="InterPro" id="IPR005813">
    <property type="entry name" value="Ribosomal_bL20"/>
</dbReference>
<dbReference type="InterPro" id="IPR049946">
    <property type="entry name" value="RIBOSOMAL_L20_CS"/>
</dbReference>
<dbReference type="InterPro" id="IPR035566">
    <property type="entry name" value="Ribosomal_protein_bL20_C"/>
</dbReference>
<dbReference type="NCBIfam" id="TIGR01032">
    <property type="entry name" value="rplT_bact"/>
    <property type="match status" value="1"/>
</dbReference>
<dbReference type="PANTHER" id="PTHR10986">
    <property type="entry name" value="39S RIBOSOMAL PROTEIN L20"/>
    <property type="match status" value="1"/>
</dbReference>
<dbReference type="Pfam" id="PF00453">
    <property type="entry name" value="Ribosomal_L20"/>
    <property type="match status" value="1"/>
</dbReference>
<dbReference type="PRINTS" id="PR00062">
    <property type="entry name" value="RIBOSOMALL20"/>
</dbReference>
<dbReference type="SUPFAM" id="SSF74731">
    <property type="entry name" value="Ribosomal protein L20"/>
    <property type="match status" value="1"/>
</dbReference>
<dbReference type="PROSITE" id="PS00937">
    <property type="entry name" value="RIBOSOMAL_L20"/>
    <property type="match status" value="1"/>
</dbReference>
<comment type="function">
    <text evidence="1">Binds directly to 23S ribosomal RNA and is necessary for the in vitro assembly process of the 50S ribosomal subunit. It is not involved in the protein synthesizing functions of that subunit.</text>
</comment>
<comment type="subcellular location">
    <subcellularLocation>
        <location>Plastid</location>
        <location>Chloroplast</location>
    </subcellularLocation>
</comment>
<comment type="similarity">
    <text evidence="1">Belongs to the bacterial ribosomal protein bL20 family.</text>
</comment>
<evidence type="ECO:0000255" key="1">
    <source>
        <dbReference type="HAMAP-Rule" id="MF_00382"/>
    </source>
</evidence>
<evidence type="ECO:0000305" key="2"/>
<geneLocation type="chloroplast"/>
<reference key="1">
    <citation type="journal article" date="2007" name="Mol. Phylogenet. Evol.">
        <title>Phylogenetic and evolutionary implications of complete chloroplast genome sequences of four early-diverging angiosperms: Buxus (Buxaceae), Chloranthus (Chloranthaceae), Dioscorea (Dioscoreaceae), and Illicium (Schisandraceae).</title>
        <authorList>
            <person name="Hansen D.R."/>
            <person name="Dastidar S.G."/>
            <person name="Cai Z."/>
            <person name="Penaflor C."/>
            <person name="Kuehl J.V."/>
            <person name="Boore J.L."/>
            <person name="Jansen R.K."/>
        </authorList>
    </citation>
    <scope>NUCLEOTIDE SEQUENCE [LARGE SCALE GENOMIC DNA]</scope>
</reference>
<name>RK20_ILLOL</name>
<accession>A6MMW7</accession>
<organism>
    <name type="scientific">Illicium oligandrum</name>
    <name type="common">Star anise</name>
    <dbReference type="NCBI Taxonomy" id="145286"/>
    <lineage>
        <taxon>Eukaryota</taxon>
        <taxon>Viridiplantae</taxon>
        <taxon>Streptophyta</taxon>
        <taxon>Embryophyta</taxon>
        <taxon>Tracheophyta</taxon>
        <taxon>Spermatophyta</taxon>
        <taxon>Magnoliopsida</taxon>
        <taxon>Austrobaileyales</taxon>
        <taxon>Schisandraceae</taxon>
        <taxon>Illicium</taxon>
    </lineage>
</organism>
<proteinExistence type="inferred from homology"/>
<keyword id="KW-0150">Chloroplast</keyword>
<keyword id="KW-0934">Plastid</keyword>
<keyword id="KW-0687">Ribonucleoprotein</keyword>
<keyword id="KW-0689">Ribosomal protein</keyword>
<keyword id="KW-0694">RNA-binding</keyword>
<keyword id="KW-0699">rRNA-binding</keyword>
<protein>
    <recommendedName>
        <fullName evidence="1">Large ribosomal subunit protein bL20c</fullName>
    </recommendedName>
    <alternativeName>
        <fullName evidence="2">50S ribosomal protein L20, chloroplastic</fullName>
    </alternativeName>
</protein>